<evidence type="ECO:0000255" key="1">
    <source>
        <dbReference type="HAMAP-Rule" id="MF_00464"/>
    </source>
</evidence>
<reference key="1">
    <citation type="journal article" date="2009" name="J. Bacteriol.">
        <title>Complete and draft genome sequences of six members of the Aquificales.</title>
        <authorList>
            <person name="Reysenbach A.-L."/>
            <person name="Hamamura N."/>
            <person name="Podar M."/>
            <person name="Griffiths E."/>
            <person name="Ferreira S."/>
            <person name="Hochstein R."/>
            <person name="Heidelberg J."/>
            <person name="Johnson J."/>
            <person name="Mead D."/>
            <person name="Pohorille A."/>
            <person name="Sarmiento M."/>
            <person name="Schweighofer K."/>
            <person name="Seshadri R."/>
            <person name="Voytek M.A."/>
        </authorList>
    </citation>
    <scope>NUCLEOTIDE SEQUENCE [LARGE SCALE GENOMIC DNA]</scope>
    <source>
        <strain>YO3AOP1</strain>
    </source>
</reference>
<protein>
    <recommendedName>
        <fullName evidence="1">S-adenosylmethionine decarboxylase proenzyme</fullName>
        <shortName evidence="1">AdoMetDC</shortName>
        <shortName evidence="1">SAMDC</shortName>
        <ecNumber evidence="1">4.1.1.50</ecNumber>
    </recommendedName>
    <component>
        <recommendedName>
            <fullName evidence="1">S-adenosylmethionine decarboxylase beta chain</fullName>
        </recommendedName>
    </component>
    <component>
        <recommendedName>
            <fullName evidence="1">S-adenosylmethionine decarboxylase alpha chain</fullName>
        </recommendedName>
    </component>
</protein>
<organism>
    <name type="scientific">Sulfurihydrogenibium sp. (strain YO3AOP1)</name>
    <dbReference type="NCBI Taxonomy" id="436114"/>
    <lineage>
        <taxon>Bacteria</taxon>
        <taxon>Pseudomonadati</taxon>
        <taxon>Aquificota</taxon>
        <taxon>Aquificia</taxon>
        <taxon>Aquificales</taxon>
        <taxon>Hydrogenothermaceae</taxon>
        <taxon>Sulfurihydrogenibium</taxon>
    </lineage>
</organism>
<proteinExistence type="inferred from homology"/>
<comment type="function">
    <text evidence="1">Catalyzes the decarboxylation of S-adenosylmethionine to S-adenosylmethioninamine (dcAdoMet), the propylamine donor required for the synthesis of the polyamines spermine and spermidine from the diamine putrescine.</text>
</comment>
<comment type="catalytic activity">
    <reaction evidence="1">
        <text>S-adenosyl-L-methionine + H(+) = S-adenosyl 3-(methylsulfanyl)propylamine + CO2</text>
        <dbReference type="Rhea" id="RHEA:15981"/>
        <dbReference type="ChEBI" id="CHEBI:15378"/>
        <dbReference type="ChEBI" id="CHEBI:16526"/>
        <dbReference type="ChEBI" id="CHEBI:57443"/>
        <dbReference type="ChEBI" id="CHEBI:59789"/>
        <dbReference type="EC" id="4.1.1.50"/>
    </reaction>
</comment>
<comment type="cofactor">
    <cofactor evidence="1">
        <name>pyruvate</name>
        <dbReference type="ChEBI" id="CHEBI:15361"/>
    </cofactor>
    <text evidence="1">Binds 1 pyruvoyl group covalently per subunit.</text>
</comment>
<comment type="pathway">
    <text evidence="1">Amine and polyamine biosynthesis; S-adenosylmethioninamine biosynthesis; S-adenosylmethioninamine from S-adenosyl-L-methionine: step 1/1.</text>
</comment>
<comment type="subunit">
    <text evidence="1">Heterotetramer of two alpha and two beta chains arranged as a dimer of alpha/beta heterodimers.</text>
</comment>
<comment type="PTM">
    <text evidence="1">Is synthesized initially as an inactive proenzyme. Formation of the active enzyme involves a self-maturation process in which the active site pyruvoyl group is generated from an internal serine residue via an autocatalytic post-translational modification. Two non-identical subunits are generated from the proenzyme in this reaction, and the pyruvate is formed at the N-terminus of the alpha chain, which is derived from the carboxyl end of the proenzyme. The post-translation cleavage follows an unusual pathway, termed non-hydrolytic serinolysis, in which the side chain hydroxyl group of the serine supplies its oxygen atom to form the C-terminus of the beta chain, while the remainder of the serine residue undergoes an oxidative deamination to produce ammonia and the pyruvoyl group blocking the N-terminus of the alpha chain.</text>
</comment>
<comment type="similarity">
    <text evidence="1">Belongs to the prokaryotic AdoMetDC family. Type 1 subfamily.</text>
</comment>
<name>SPEH_SULSY</name>
<keyword id="KW-0068">Autocatalytic cleavage</keyword>
<keyword id="KW-0210">Decarboxylase</keyword>
<keyword id="KW-0456">Lyase</keyword>
<keyword id="KW-0620">Polyamine biosynthesis</keyword>
<keyword id="KW-0670">Pyruvate</keyword>
<keyword id="KW-0949">S-adenosyl-L-methionine</keyword>
<keyword id="KW-0704">Schiff base</keyword>
<keyword id="KW-0745">Spermidine biosynthesis</keyword>
<keyword id="KW-0865">Zymogen</keyword>
<gene>
    <name evidence="1" type="primary">speH</name>
    <name type="ordered locus">SYO3AOP1_0324</name>
</gene>
<feature type="chain" id="PRO_1000125461" description="S-adenosylmethionine decarboxylase beta chain" evidence="1">
    <location>
        <begin position="1"/>
        <end position="63"/>
    </location>
</feature>
<feature type="chain" id="PRO_1000125462" description="S-adenosylmethionine decarboxylase alpha chain" evidence="1">
    <location>
        <begin position="64"/>
        <end position="133"/>
    </location>
</feature>
<feature type="active site" description="Schiff-base intermediate with substrate; via pyruvic acid" evidence="1">
    <location>
        <position position="64"/>
    </location>
</feature>
<feature type="active site" description="Proton acceptor; for processing activity" evidence="1">
    <location>
        <position position="69"/>
    </location>
</feature>
<feature type="active site" description="Proton donor; for catalytic activity" evidence="1">
    <location>
        <position position="84"/>
    </location>
</feature>
<feature type="site" description="Cleavage (non-hydrolytic); by autolysis" evidence="1">
    <location>
        <begin position="63"/>
        <end position="64"/>
    </location>
</feature>
<feature type="modified residue" description="Pyruvic acid (Ser); by autocatalysis" evidence="1">
    <location>
        <position position="64"/>
    </location>
</feature>
<sequence length="133" mass="14893">MEKTLGLHILADLYGVDFEKIDHVEDVKALLEGAVKYANLSKLSSHFHQFNPHGATGVILLEESHISIHTWPEHGYAAIDVYTCGGKEKTFKAMEYIIKTLKPKRIDEKIAERGVVPVNPEGVNIEKMQLAQV</sequence>
<accession>B2V7P6</accession>
<dbReference type="EC" id="4.1.1.50" evidence="1"/>
<dbReference type="EMBL" id="CP001080">
    <property type="protein sequence ID" value="ACD65969.1"/>
    <property type="molecule type" value="Genomic_DNA"/>
</dbReference>
<dbReference type="RefSeq" id="WP_007545558.1">
    <property type="nucleotide sequence ID" value="NC_010730.1"/>
</dbReference>
<dbReference type="SMR" id="B2V7P6"/>
<dbReference type="STRING" id="436114.SYO3AOP1_0324"/>
<dbReference type="KEGG" id="sul:SYO3AOP1_0324"/>
<dbReference type="eggNOG" id="COG1586">
    <property type="taxonomic scope" value="Bacteria"/>
</dbReference>
<dbReference type="HOGENOM" id="CLU_125470_2_3_0"/>
<dbReference type="UniPathway" id="UPA00331">
    <property type="reaction ID" value="UER00451"/>
</dbReference>
<dbReference type="GO" id="GO:0005829">
    <property type="term" value="C:cytosol"/>
    <property type="evidence" value="ECO:0007669"/>
    <property type="project" value="TreeGrafter"/>
</dbReference>
<dbReference type="GO" id="GO:0004014">
    <property type="term" value="F:adenosylmethionine decarboxylase activity"/>
    <property type="evidence" value="ECO:0007669"/>
    <property type="project" value="UniProtKB-UniRule"/>
</dbReference>
<dbReference type="GO" id="GO:0008295">
    <property type="term" value="P:spermidine biosynthetic process"/>
    <property type="evidence" value="ECO:0007669"/>
    <property type="project" value="UniProtKB-UniRule"/>
</dbReference>
<dbReference type="Gene3D" id="3.60.90.10">
    <property type="entry name" value="S-adenosylmethionine decarboxylase"/>
    <property type="match status" value="1"/>
</dbReference>
<dbReference type="HAMAP" id="MF_00464">
    <property type="entry name" value="AdoMetDC_1"/>
    <property type="match status" value="1"/>
</dbReference>
<dbReference type="InterPro" id="IPR003826">
    <property type="entry name" value="AdoMetDC_fam_prok"/>
</dbReference>
<dbReference type="InterPro" id="IPR016067">
    <property type="entry name" value="S-AdoMet_deCO2ase_core"/>
</dbReference>
<dbReference type="InterPro" id="IPR017716">
    <property type="entry name" value="S-AdoMet_deCOase_pro-enz"/>
</dbReference>
<dbReference type="NCBIfam" id="TIGR03330">
    <property type="entry name" value="SAM_DCase_Bsu"/>
    <property type="match status" value="1"/>
</dbReference>
<dbReference type="PANTHER" id="PTHR33866">
    <property type="entry name" value="S-ADENOSYLMETHIONINE DECARBOXYLASE PROENZYME"/>
    <property type="match status" value="1"/>
</dbReference>
<dbReference type="PANTHER" id="PTHR33866:SF2">
    <property type="entry name" value="S-ADENOSYLMETHIONINE DECARBOXYLASE PROENZYME"/>
    <property type="match status" value="1"/>
</dbReference>
<dbReference type="Pfam" id="PF02675">
    <property type="entry name" value="AdoMet_dc"/>
    <property type="match status" value="1"/>
</dbReference>
<dbReference type="SUPFAM" id="SSF56276">
    <property type="entry name" value="S-adenosylmethionine decarboxylase"/>
    <property type="match status" value="1"/>
</dbReference>